<keyword id="KW-0004">4Fe-4S</keyword>
<keyword id="KW-0963">Cytoplasm</keyword>
<keyword id="KW-0408">Iron</keyword>
<keyword id="KW-0411">Iron-sulfur</keyword>
<keyword id="KW-0479">Metal-binding</keyword>
<keyword id="KW-1185">Reference proteome</keyword>
<keyword id="KW-0949">S-adenosyl-L-methionine</keyword>
<keyword id="KW-0808">Transferase</keyword>
<proteinExistence type="inferred from homology"/>
<feature type="chain" id="PRO_0000102339" description="Lipoyl synthase 2">
    <location>
        <begin position="1"/>
        <end position="306"/>
    </location>
</feature>
<feature type="domain" description="Radical SAM core" evidence="2">
    <location>
        <begin position="61"/>
        <end position="289"/>
    </location>
</feature>
<feature type="binding site" evidence="1">
    <location>
        <position position="49"/>
    </location>
    <ligand>
        <name>[4Fe-4S] cluster</name>
        <dbReference type="ChEBI" id="CHEBI:49883"/>
        <label>1</label>
    </ligand>
</feature>
<feature type="binding site" evidence="1">
    <location>
        <position position="54"/>
    </location>
    <ligand>
        <name>[4Fe-4S] cluster</name>
        <dbReference type="ChEBI" id="CHEBI:49883"/>
        <label>1</label>
    </ligand>
</feature>
<feature type="binding site" evidence="1">
    <location>
        <position position="60"/>
    </location>
    <ligand>
        <name>[4Fe-4S] cluster</name>
        <dbReference type="ChEBI" id="CHEBI:49883"/>
        <label>1</label>
    </ligand>
</feature>
<feature type="binding site" evidence="1">
    <location>
        <position position="75"/>
    </location>
    <ligand>
        <name>[4Fe-4S] cluster</name>
        <dbReference type="ChEBI" id="CHEBI:49883"/>
        <label>2</label>
        <note>4Fe-4S-S-AdoMet</note>
    </ligand>
</feature>
<feature type="binding site" evidence="1">
    <location>
        <position position="79"/>
    </location>
    <ligand>
        <name>[4Fe-4S] cluster</name>
        <dbReference type="ChEBI" id="CHEBI:49883"/>
        <label>2</label>
        <note>4Fe-4S-S-AdoMet</note>
    </ligand>
</feature>
<feature type="binding site" evidence="1">
    <location>
        <position position="82"/>
    </location>
    <ligand>
        <name>[4Fe-4S] cluster</name>
        <dbReference type="ChEBI" id="CHEBI:49883"/>
        <label>2</label>
        <note>4Fe-4S-S-AdoMet</note>
    </ligand>
</feature>
<feature type="binding site" evidence="1">
    <location>
        <position position="300"/>
    </location>
    <ligand>
        <name>[4Fe-4S] cluster</name>
        <dbReference type="ChEBI" id="CHEBI:49883"/>
        <label>1</label>
    </ligand>
</feature>
<gene>
    <name evidence="1" type="primary">lipA2</name>
    <name type="synonym">lipA</name>
    <name type="ordered locus">PMT_1076</name>
</gene>
<comment type="function">
    <text evidence="1">Catalyzes the radical-mediated insertion of two sulfur atoms into the C-6 and C-8 positions of the octanoyl moiety bound to the lipoyl domains of lipoate-dependent enzymes, thereby converting the octanoylated domains into lipoylated derivatives.</text>
</comment>
<comment type="catalytic activity">
    <reaction evidence="1">
        <text>[[Fe-S] cluster scaffold protein carrying a second [4Fe-4S](2+) cluster] + N(6)-octanoyl-L-lysyl-[protein] + 2 oxidized [2Fe-2S]-[ferredoxin] + 2 S-adenosyl-L-methionine + 4 H(+) = [[Fe-S] cluster scaffold protein] + N(6)-[(R)-dihydrolipoyl]-L-lysyl-[protein] + 4 Fe(3+) + 2 hydrogen sulfide + 2 5'-deoxyadenosine + 2 L-methionine + 2 reduced [2Fe-2S]-[ferredoxin]</text>
        <dbReference type="Rhea" id="RHEA:16585"/>
        <dbReference type="Rhea" id="RHEA-COMP:9928"/>
        <dbReference type="Rhea" id="RHEA-COMP:10000"/>
        <dbReference type="Rhea" id="RHEA-COMP:10001"/>
        <dbReference type="Rhea" id="RHEA-COMP:10475"/>
        <dbReference type="Rhea" id="RHEA-COMP:14568"/>
        <dbReference type="Rhea" id="RHEA-COMP:14569"/>
        <dbReference type="ChEBI" id="CHEBI:15378"/>
        <dbReference type="ChEBI" id="CHEBI:17319"/>
        <dbReference type="ChEBI" id="CHEBI:29034"/>
        <dbReference type="ChEBI" id="CHEBI:29919"/>
        <dbReference type="ChEBI" id="CHEBI:33722"/>
        <dbReference type="ChEBI" id="CHEBI:33737"/>
        <dbReference type="ChEBI" id="CHEBI:33738"/>
        <dbReference type="ChEBI" id="CHEBI:57844"/>
        <dbReference type="ChEBI" id="CHEBI:59789"/>
        <dbReference type="ChEBI" id="CHEBI:78809"/>
        <dbReference type="ChEBI" id="CHEBI:83100"/>
        <dbReference type="EC" id="2.8.1.8"/>
    </reaction>
</comment>
<comment type="cofactor">
    <cofactor evidence="1">
        <name>[4Fe-4S] cluster</name>
        <dbReference type="ChEBI" id="CHEBI:49883"/>
    </cofactor>
    <text evidence="1">Binds 2 [4Fe-4S] clusters per subunit. One cluster is coordinated with 3 cysteines and an exchangeable S-adenosyl-L-methionine.</text>
</comment>
<comment type="pathway">
    <text evidence="1">Protein modification; protein lipoylation via endogenous pathway; protein N(6)-(lipoyl)lysine from octanoyl-[acyl-carrier-protein]: step 2/2.</text>
</comment>
<comment type="subcellular location">
    <subcellularLocation>
        <location evidence="1">Cytoplasm</location>
    </subcellularLocation>
</comment>
<comment type="similarity">
    <text evidence="1">Belongs to the radical SAM superfamily. Lipoyl synthase family.</text>
</comment>
<accession>Q7V6S0</accession>
<organism>
    <name type="scientific">Prochlorococcus marinus (strain MIT 9313)</name>
    <dbReference type="NCBI Taxonomy" id="74547"/>
    <lineage>
        <taxon>Bacteria</taxon>
        <taxon>Bacillati</taxon>
        <taxon>Cyanobacteriota</taxon>
        <taxon>Cyanophyceae</taxon>
        <taxon>Synechococcales</taxon>
        <taxon>Prochlorococcaceae</taxon>
        <taxon>Prochlorococcus</taxon>
    </lineage>
</organism>
<reference key="1">
    <citation type="journal article" date="2003" name="Nature">
        <title>Genome divergence in two Prochlorococcus ecotypes reflects oceanic niche differentiation.</title>
        <authorList>
            <person name="Rocap G."/>
            <person name="Larimer F.W."/>
            <person name="Lamerdin J.E."/>
            <person name="Malfatti S."/>
            <person name="Chain P."/>
            <person name="Ahlgren N.A."/>
            <person name="Arellano A."/>
            <person name="Coleman M."/>
            <person name="Hauser L."/>
            <person name="Hess W.R."/>
            <person name="Johnson Z.I."/>
            <person name="Land M.L."/>
            <person name="Lindell D."/>
            <person name="Post A.F."/>
            <person name="Regala W."/>
            <person name="Shah M."/>
            <person name="Shaw S.L."/>
            <person name="Steglich C."/>
            <person name="Sullivan M.B."/>
            <person name="Ting C.S."/>
            <person name="Tolonen A."/>
            <person name="Webb E.A."/>
            <person name="Zinser E.R."/>
            <person name="Chisholm S.W."/>
        </authorList>
    </citation>
    <scope>NUCLEOTIDE SEQUENCE [LARGE SCALE GENOMIC DNA]</scope>
    <source>
        <strain>MIT 9313</strain>
    </source>
</reference>
<dbReference type="EC" id="2.8.1.8" evidence="1"/>
<dbReference type="EMBL" id="BX548175">
    <property type="protein sequence ID" value="CAE21251.1"/>
    <property type="molecule type" value="Genomic_DNA"/>
</dbReference>
<dbReference type="RefSeq" id="WP_011130448.1">
    <property type="nucleotide sequence ID" value="NC_005071.1"/>
</dbReference>
<dbReference type="SMR" id="Q7V6S0"/>
<dbReference type="KEGG" id="pmt:PMT_1076"/>
<dbReference type="eggNOG" id="COG0320">
    <property type="taxonomic scope" value="Bacteria"/>
</dbReference>
<dbReference type="HOGENOM" id="CLU_033144_2_1_3"/>
<dbReference type="OrthoDB" id="9787898at2"/>
<dbReference type="UniPathway" id="UPA00538">
    <property type="reaction ID" value="UER00593"/>
</dbReference>
<dbReference type="Proteomes" id="UP000001423">
    <property type="component" value="Chromosome"/>
</dbReference>
<dbReference type="GO" id="GO:0005737">
    <property type="term" value="C:cytoplasm"/>
    <property type="evidence" value="ECO:0007669"/>
    <property type="project" value="UniProtKB-SubCell"/>
</dbReference>
<dbReference type="GO" id="GO:0051539">
    <property type="term" value="F:4 iron, 4 sulfur cluster binding"/>
    <property type="evidence" value="ECO:0007669"/>
    <property type="project" value="UniProtKB-UniRule"/>
</dbReference>
<dbReference type="GO" id="GO:0016992">
    <property type="term" value="F:lipoate synthase activity"/>
    <property type="evidence" value="ECO:0007669"/>
    <property type="project" value="UniProtKB-UniRule"/>
</dbReference>
<dbReference type="GO" id="GO:0046872">
    <property type="term" value="F:metal ion binding"/>
    <property type="evidence" value="ECO:0007669"/>
    <property type="project" value="UniProtKB-KW"/>
</dbReference>
<dbReference type="CDD" id="cd01335">
    <property type="entry name" value="Radical_SAM"/>
    <property type="match status" value="1"/>
</dbReference>
<dbReference type="Gene3D" id="3.20.20.70">
    <property type="entry name" value="Aldolase class I"/>
    <property type="match status" value="1"/>
</dbReference>
<dbReference type="HAMAP" id="MF_00206">
    <property type="entry name" value="Lipoyl_synth"/>
    <property type="match status" value="1"/>
</dbReference>
<dbReference type="InterPro" id="IPR013785">
    <property type="entry name" value="Aldolase_TIM"/>
</dbReference>
<dbReference type="InterPro" id="IPR006638">
    <property type="entry name" value="Elp3/MiaA/NifB-like_rSAM"/>
</dbReference>
<dbReference type="InterPro" id="IPR003698">
    <property type="entry name" value="Lipoyl_synth"/>
</dbReference>
<dbReference type="InterPro" id="IPR007197">
    <property type="entry name" value="rSAM"/>
</dbReference>
<dbReference type="NCBIfam" id="TIGR00510">
    <property type="entry name" value="lipA"/>
    <property type="match status" value="1"/>
</dbReference>
<dbReference type="NCBIfam" id="NF004019">
    <property type="entry name" value="PRK05481.1"/>
    <property type="match status" value="1"/>
</dbReference>
<dbReference type="NCBIfam" id="NF009544">
    <property type="entry name" value="PRK12928.1"/>
    <property type="match status" value="1"/>
</dbReference>
<dbReference type="PANTHER" id="PTHR10949">
    <property type="entry name" value="LIPOYL SYNTHASE"/>
    <property type="match status" value="1"/>
</dbReference>
<dbReference type="PANTHER" id="PTHR10949:SF0">
    <property type="entry name" value="LIPOYL SYNTHASE, MITOCHONDRIAL"/>
    <property type="match status" value="1"/>
</dbReference>
<dbReference type="Pfam" id="PF04055">
    <property type="entry name" value="Radical_SAM"/>
    <property type="match status" value="1"/>
</dbReference>
<dbReference type="PIRSF" id="PIRSF005963">
    <property type="entry name" value="Lipoyl_synth"/>
    <property type="match status" value="1"/>
</dbReference>
<dbReference type="SFLD" id="SFLDF00271">
    <property type="entry name" value="lipoyl_synthase"/>
    <property type="match status" value="1"/>
</dbReference>
<dbReference type="SFLD" id="SFLDG01058">
    <property type="entry name" value="lipoyl_synthase_like"/>
    <property type="match status" value="1"/>
</dbReference>
<dbReference type="SMART" id="SM00729">
    <property type="entry name" value="Elp3"/>
    <property type="match status" value="1"/>
</dbReference>
<dbReference type="SUPFAM" id="SSF102114">
    <property type="entry name" value="Radical SAM enzymes"/>
    <property type="match status" value="1"/>
</dbReference>
<dbReference type="PROSITE" id="PS51918">
    <property type="entry name" value="RADICAL_SAM"/>
    <property type="match status" value="1"/>
</dbReference>
<evidence type="ECO:0000255" key="1">
    <source>
        <dbReference type="HAMAP-Rule" id="MF_00206"/>
    </source>
</evidence>
<evidence type="ECO:0000255" key="2">
    <source>
        <dbReference type="PROSITE-ProRule" id="PRU01266"/>
    </source>
</evidence>
<protein>
    <recommendedName>
        <fullName evidence="1">Lipoyl synthase 2</fullName>
        <ecNumber evidence="1">2.8.1.8</ecNumber>
    </recommendedName>
    <alternativeName>
        <fullName evidence="1">Lip-syn 2</fullName>
        <shortName evidence="1">LS 2</shortName>
    </alternativeName>
    <alternativeName>
        <fullName evidence="1">Lipoate synthase 2</fullName>
    </alternativeName>
    <alternativeName>
        <fullName evidence="1">Lipoic acid synthase 2</fullName>
    </alternativeName>
    <alternativeName>
        <fullName evidence="1">Sulfur insertion protein LipA 2</fullName>
    </alternativeName>
</protein>
<sequence length="306" mass="34003">MSSTHRPTQYSSILPAERLPEWLRRPIGSVSQLEQMQQLVKGNHLHTICEEGRCPNRGECYAAGTATFLLGGSICTRSCAFCQVMKGQSPQAIDPLEAERVADAVQQMGLRYVVLTSVARDDLPDHGVSIFTETMAAIRQRNPLIEIEVLTPDFWGGVADLAKALEAQRERLTQLLMAAPVCFNHNLETVERLQSKVRRGATYHHSLSLLAAARELAPNIPTKSGLMLGLGEEQEEVVQTLEDLRSVDCQRVTLGQYLRPSLAHIPVHRYWHPEDFKNLAEVACKLGFAQVRSGPLVRSSYHAGEE</sequence>
<name>LIPA2_PROMM</name>